<protein>
    <recommendedName>
        <fullName evidence="1">Oligoribonuclease</fullName>
        <ecNumber evidence="1">3.1.15.-</ecNumber>
    </recommendedName>
</protein>
<keyword id="KW-0963">Cytoplasm</keyword>
<keyword id="KW-0269">Exonuclease</keyword>
<keyword id="KW-0378">Hydrolase</keyword>
<keyword id="KW-0540">Nuclease</keyword>
<reference key="1">
    <citation type="journal article" date="2010" name="Genome Biol. Evol.">
        <title>Continuing evolution of Burkholderia mallei through genome reduction and large-scale rearrangements.</title>
        <authorList>
            <person name="Losada L."/>
            <person name="Ronning C.M."/>
            <person name="DeShazer D."/>
            <person name="Woods D."/>
            <person name="Fedorova N."/>
            <person name="Kim H.S."/>
            <person name="Shabalina S.A."/>
            <person name="Pearson T.R."/>
            <person name="Brinkac L."/>
            <person name="Tan P."/>
            <person name="Nandi T."/>
            <person name="Crabtree J."/>
            <person name="Badger J."/>
            <person name="Beckstrom-Sternberg S."/>
            <person name="Saqib M."/>
            <person name="Schutzer S.E."/>
            <person name="Keim P."/>
            <person name="Nierman W.C."/>
        </authorList>
    </citation>
    <scope>NUCLEOTIDE SEQUENCE [LARGE SCALE GENOMIC DNA]</scope>
    <source>
        <strain>NCTC 10229</strain>
    </source>
</reference>
<proteinExistence type="inferred from homology"/>
<dbReference type="EC" id="3.1.15.-" evidence="1"/>
<dbReference type="EMBL" id="CP000546">
    <property type="protein sequence ID" value="ABN02476.1"/>
    <property type="molecule type" value="Genomic_DNA"/>
</dbReference>
<dbReference type="RefSeq" id="WP_004189767.1">
    <property type="nucleotide sequence ID" value="NC_008836.1"/>
</dbReference>
<dbReference type="SMR" id="A2S4M9"/>
<dbReference type="GeneID" id="92978164"/>
<dbReference type="KEGG" id="bml:BMA10229_A0908"/>
<dbReference type="HOGENOM" id="CLU_064761_2_0_4"/>
<dbReference type="Proteomes" id="UP000002283">
    <property type="component" value="Chromosome I"/>
</dbReference>
<dbReference type="GO" id="GO:0005737">
    <property type="term" value="C:cytoplasm"/>
    <property type="evidence" value="ECO:0007669"/>
    <property type="project" value="UniProtKB-SubCell"/>
</dbReference>
<dbReference type="GO" id="GO:0000175">
    <property type="term" value="F:3'-5'-RNA exonuclease activity"/>
    <property type="evidence" value="ECO:0007669"/>
    <property type="project" value="InterPro"/>
</dbReference>
<dbReference type="GO" id="GO:0003676">
    <property type="term" value="F:nucleic acid binding"/>
    <property type="evidence" value="ECO:0007669"/>
    <property type="project" value="InterPro"/>
</dbReference>
<dbReference type="GO" id="GO:0006259">
    <property type="term" value="P:DNA metabolic process"/>
    <property type="evidence" value="ECO:0007669"/>
    <property type="project" value="UniProtKB-ARBA"/>
</dbReference>
<dbReference type="CDD" id="cd06135">
    <property type="entry name" value="Orn"/>
    <property type="match status" value="1"/>
</dbReference>
<dbReference type="FunFam" id="3.30.420.10:FF:000003">
    <property type="entry name" value="Oligoribonuclease"/>
    <property type="match status" value="1"/>
</dbReference>
<dbReference type="Gene3D" id="3.30.420.10">
    <property type="entry name" value="Ribonuclease H-like superfamily/Ribonuclease H"/>
    <property type="match status" value="1"/>
</dbReference>
<dbReference type="HAMAP" id="MF_00045">
    <property type="entry name" value="Oligoribonuclease"/>
    <property type="match status" value="1"/>
</dbReference>
<dbReference type="InterPro" id="IPR013520">
    <property type="entry name" value="Exonuclease_RNaseT/DNA_pol3"/>
</dbReference>
<dbReference type="InterPro" id="IPR022894">
    <property type="entry name" value="Oligoribonuclease"/>
</dbReference>
<dbReference type="InterPro" id="IPR012337">
    <property type="entry name" value="RNaseH-like_sf"/>
</dbReference>
<dbReference type="InterPro" id="IPR036397">
    <property type="entry name" value="RNaseH_sf"/>
</dbReference>
<dbReference type="NCBIfam" id="NF003765">
    <property type="entry name" value="PRK05359.1"/>
    <property type="match status" value="1"/>
</dbReference>
<dbReference type="PANTHER" id="PTHR11046">
    <property type="entry name" value="OLIGORIBONUCLEASE, MITOCHONDRIAL"/>
    <property type="match status" value="1"/>
</dbReference>
<dbReference type="PANTHER" id="PTHR11046:SF0">
    <property type="entry name" value="OLIGORIBONUCLEASE, MITOCHONDRIAL"/>
    <property type="match status" value="1"/>
</dbReference>
<dbReference type="Pfam" id="PF00929">
    <property type="entry name" value="RNase_T"/>
    <property type="match status" value="1"/>
</dbReference>
<dbReference type="SMART" id="SM00479">
    <property type="entry name" value="EXOIII"/>
    <property type="match status" value="1"/>
</dbReference>
<dbReference type="SUPFAM" id="SSF53098">
    <property type="entry name" value="Ribonuclease H-like"/>
    <property type="match status" value="1"/>
</dbReference>
<feature type="chain" id="PRO_1000004236" description="Oligoribonuclease">
    <location>
        <begin position="1"/>
        <end position="201"/>
    </location>
</feature>
<feature type="domain" description="Exonuclease" evidence="1">
    <location>
        <begin position="20"/>
        <end position="183"/>
    </location>
</feature>
<feature type="active site" evidence="1">
    <location>
        <position position="141"/>
    </location>
</feature>
<sequence>MTDISAVAGQPALVRNELNLVWLDMEMTGLDPDTDRIIEIAVVVTNSTLDIAVEGPVLAIHQSDETLAKMDDWNKNTHGRSGLIDRVRASSVTEADAAAQIAAFLAEHVPPGKSPMCGNSICQDRRFMARWMPELERFFHYRNLDVSTLKELCRRWQPAIYKGFQKRAMHTALADIHESIDELKYYRERFLIPAAPAGETA</sequence>
<evidence type="ECO:0000255" key="1">
    <source>
        <dbReference type="HAMAP-Rule" id="MF_00045"/>
    </source>
</evidence>
<name>ORN_BURM9</name>
<accession>A2S4M9</accession>
<comment type="function">
    <text evidence="1">3'-to-5' exoribonuclease specific for small oligoribonucleotides.</text>
</comment>
<comment type="subcellular location">
    <subcellularLocation>
        <location evidence="1">Cytoplasm</location>
    </subcellularLocation>
</comment>
<comment type="similarity">
    <text evidence="1">Belongs to the oligoribonuclease family.</text>
</comment>
<gene>
    <name evidence="1" type="primary">orn</name>
    <name type="ordered locus">BMA10229_A0908</name>
</gene>
<organism>
    <name type="scientific">Burkholderia mallei (strain NCTC 10229)</name>
    <dbReference type="NCBI Taxonomy" id="412022"/>
    <lineage>
        <taxon>Bacteria</taxon>
        <taxon>Pseudomonadati</taxon>
        <taxon>Pseudomonadota</taxon>
        <taxon>Betaproteobacteria</taxon>
        <taxon>Burkholderiales</taxon>
        <taxon>Burkholderiaceae</taxon>
        <taxon>Burkholderia</taxon>
        <taxon>pseudomallei group</taxon>
    </lineage>
</organism>